<protein>
    <recommendedName>
        <fullName evidence="1">Hemagglutinin</fullName>
    </recommendedName>
    <component>
        <recommendedName>
            <fullName evidence="1">Hemagglutinin HA1 chain</fullName>
        </recommendedName>
    </component>
    <component>
        <recommendedName>
            <fullName evidence="1">Hemagglutinin HA2 chain</fullName>
        </recommendedName>
    </component>
</protein>
<organism>
    <name type="scientific">Influenza A virus (strain A/Equine/Fontainebleau/1976 H3N8)</name>
    <name type="common">Influenza A virus (strain A/Equine/France/1/1976 H3N8)</name>
    <dbReference type="NCBI Taxonomy" id="387217"/>
    <lineage>
        <taxon>Viruses</taxon>
        <taxon>Riboviria</taxon>
        <taxon>Orthornavirae</taxon>
        <taxon>Negarnaviricota</taxon>
        <taxon>Polyploviricotina</taxon>
        <taxon>Insthoviricetes</taxon>
        <taxon>Articulavirales</taxon>
        <taxon>Orthomyxoviridae</taxon>
        <taxon>Alphainfluenzavirus</taxon>
        <taxon>Alphainfluenzavirus influenzae</taxon>
        <taxon>Influenza A virus</taxon>
    </lineage>
</organism>
<keyword id="KW-1167">Clathrin- and caveolin-independent endocytosis of virus by host</keyword>
<keyword id="KW-1165">Clathrin-mediated endocytosis of virus by host</keyword>
<keyword id="KW-1015">Disulfide bond</keyword>
<keyword id="KW-1170">Fusion of virus membrane with host endosomal membrane</keyword>
<keyword id="KW-1168">Fusion of virus membrane with host membrane</keyword>
<keyword id="KW-0325">Glycoprotein</keyword>
<keyword id="KW-0348">Hemagglutinin</keyword>
<keyword id="KW-1032">Host cell membrane</keyword>
<keyword id="KW-1043">Host membrane</keyword>
<keyword id="KW-0945">Host-virus interaction</keyword>
<keyword id="KW-0449">Lipoprotein</keyword>
<keyword id="KW-0472">Membrane</keyword>
<keyword id="KW-0564">Palmitate</keyword>
<keyword id="KW-0732">Signal</keyword>
<keyword id="KW-0812">Transmembrane</keyword>
<keyword id="KW-1133">Transmembrane helix</keyword>
<keyword id="KW-1161">Viral attachment to host cell</keyword>
<keyword id="KW-0261">Viral envelope protein</keyword>
<keyword id="KW-1162">Viral penetration into host cytoplasm</keyword>
<keyword id="KW-0946">Virion</keyword>
<keyword id="KW-1164">Virus endocytosis by host</keyword>
<keyword id="KW-1160">Virus entry into host cell</keyword>
<feature type="signal peptide" evidence="1">
    <location>
        <begin position="1"/>
        <end position="16"/>
    </location>
</feature>
<feature type="chain" id="PRO_0000440454" description="Hemagglutinin" evidence="1">
    <location>
        <begin position="17"/>
        <end position="565"/>
    </location>
</feature>
<feature type="chain" id="PRO_0000038976" description="Hemagglutinin HA1 chain">
    <location>
        <begin position="17"/>
        <end position="343"/>
    </location>
</feature>
<feature type="chain" id="PRO_0000038977" description="Hemagglutinin HA2 chain" evidence="1">
    <location>
        <begin position="345"/>
        <end position="565"/>
    </location>
</feature>
<feature type="topological domain" description="Extracellular" evidence="1">
    <location>
        <begin position="17"/>
        <end position="529"/>
    </location>
</feature>
<feature type="transmembrane region" description="Helical" evidence="1">
    <location>
        <begin position="530"/>
        <end position="550"/>
    </location>
</feature>
<feature type="topological domain" description="Cytoplasmic" evidence="1">
    <location>
        <begin position="551"/>
        <end position="565"/>
    </location>
</feature>
<feature type="site" description="Cleavage; by host" evidence="1">
    <location>
        <begin position="344"/>
        <end position="345"/>
    </location>
</feature>
<feature type="lipid moiety-binding region" description="S-palmitoyl cysteine; by host" evidence="1">
    <location>
        <position position="554"/>
    </location>
</feature>
<feature type="lipid moiety-binding region" description="S-palmitoyl cysteine; by host" evidence="1">
    <location>
        <position position="561"/>
    </location>
</feature>
<feature type="lipid moiety-binding region" description="S-palmitoyl cysteine; by host" evidence="1">
    <location>
        <position position="564"/>
    </location>
</feature>
<feature type="glycosylation site" description="N-linked (GlcNAc...) asparagine; by host" evidence="1">
    <location>
        <position position="23"/>
    </location>
</feature>
<feature type="glycosylation site" description="N-linked (GlcNAc...) asparagine; by host" evidence="1">
    <location>
        <position position="37"/>
    </location>
</feature>
<feature type="glycosylation site" description="N-linked (GlcNAc...) asparagine; by host" evidence="1">
    <location>
        <position position="53"/>
    </location>
</feature>
<feature type="glycosylation site" description="N-linked (GlcNAc...) asparagine; by host" evidence="1">
    <location>
        <position position="78"/>
    </location>
</feature>
<feature type="glycosylation site" description="N-linked (GlcNAc...) asparagine; by host" evidence="1">
    <location>
        <position position="180"/>
    </location>
</feature>
<feature type="glycosylation site" description="N-linked (GlcNAc...) asparagine; by host" evidence="1">
    <location>
        <position position="300"/>
    </location>
</feature>
<feature type="glycosylation site" description="N-linked (GlcNAc...) asparagine; by host" evidence="1">
    <location>
        <position position="498"/>
    </location>
</feature>
<feature type="disulfide bond" description="Interchain (between HA1 and HA2 chains)" evidence="1">
    <location>
        <begin position="29"/>
        <end position="481"/>
    </location>
</feature>
<feature type="disulfide bond" evidence="1">
    <location>
        <begin position="67"/>
        <end position="292"/>
    </location>
</feature>
<feature type="disulfide bond" evidence="1">
    <location>
        <begin position="79"/>
        <end position="91"/>
    </location>
</feature>
<feature type="disulfide bond" evidence="1">
    <location>
        <begin position="112"/>
        <end position="154"/>
    </location>
</feature>
<feature type="disulfide bond" evidence="1">
    <location>
        <begin position="296"/>
        <end position="320"/>
    </location>
</feature>
<feature type="disulfide bond" evidence="1">
    <location>
        <begin position="488"/>
        <end position="492"/>
    </location>
</feature>
<feature type="sequence conflict" description="In Ref. 2; ABF60576." evidence="2" ref="2">
    <original>WVY</original>
    <variation>AVD</variation>
    <location>
        <begin position="13"/>
        <end position="15"/>
    </location>
</feature>
<feature type="sequence conflict" description="In Ref. 2; ABF60576." evidence="2" ref="2">
    <original>T</original>
    <variation>I</variation>
    <location>
        <position position="20"/>
    </location>
</feature>
<feature type="sequence conflict" description="In Ref. 2; ABF60576." evidence="2" ref="2">
    <original>R</original>
    <variation>G</variation>
    <location>
        <position position="150"/>
    </location>
</feature>
<feature type="sequence conflict" description="In Ref. 2; ABF60576." evidence="2" ref="2">
    <original>N</original>
    <variation>D</variation>
    <location>
        <position position="187"/>
    </location>
</feature>
<feature type="sequence conflict" description="In Ref. 2; ABF60576." evidence="2" ref="2">
    <original>S</original>
    <variation>A</variation>
    <location>
        <position position="242"/>
    </location>
</feature>
<feature type="sequence conflict" description="In Ref. 2; ABF60576." evidence="2" ref="2">
    <original>V</original>
    <variation>W</variation>
    <location>
        <position position="293"/>
    </location>
</feature>
<feature type="sequence conflict" description="In Ref. 2; ABF60576." evidence="2" ref="2">
    <original>N</original>
    <variation>G</variation>
    <location>
        <position position="479"/>
    </location>
</feature>
<feature type="sequence conflict" description="In Ref. 2; ABF60576." evidence="2" ref="2">
    <original>Q</original>
    <variation>E</variation>
    <location>
        <position position="555"/>
    </location>
</feature>
<proteinExistence type="inferred from homology"/>
<comment type="function">
    <text>Binds to sialic acid-containing receptors on the cell surface, bringing about the attachment of the virus particle to the cell. This attachment induces virion internalization of about two third of the virus particles through clathrin-dependent endocytosis and about one third through a clathrin- and caveolin-independent pathway. Plays a major role in the determination of host range restriction and virulence. Class I viral fusion protein. Responsible for penetration of the virus into the cell cytoplasm by mediating the fusion of the membrane of the endocytosed virus particle with the endosomal membrane. Low pH in endosomes induces an irreversible conformational change in HA2, releasing the fusion hydrophobic peptide. Several trimers are required to form a competent fusion pore.</text>
</comment>
<comment type="function">
    <text evidence="1">Binds to sialic acid-containing receptors on the cell surface, bringing about the attachment of the virus particle to the cell. This attachment induces virion internalization either through clathrin-dependent endocytosis or through clathrin- and caveolin-independent pathway. Plays a major role in the determination of host range restriction and virulence. Class I viral fusion protein. Responsible for penetration of the virus into the cell cytoplasm by mediating the fusion of the membrane of the endocytosed virus particle with the endosomal membrane. Low pH in endosomes induces an irreversible conformational change in HA2, releasing the fusion hydrophobic peptide. Several trimers are required to form a competent fusion pore.</text>
</comment>
<comment type="subunit">
    <text evidence="1">Homotrimer of disulfide-linked HA1-HA2.</text>
</comment>
<comment type="subcellular location">
    <subcellularLocation>
        <location evidence="1">Virion membrane</location>
        <topology evidence="1">Single-pass type I membrane protein</topology>
    </subcellularLocation>
    <subcellularLocation>
        <location evidence="1">Host apical cell membrane</location>
        <topology evidence="1">Single-pass type I membrane protein</topology>
    </subcellularLocation>
    <text evidence="1">Targeted to the apical plasma membrane in epithelial polarized cells through a signal present in the transmembrane domain. Associated with glycosphingolipid- and cholesterol-enriched detergent-resistant lipid rafts.</text>
</comment>
<comment type="PTM">
    <text evidence="1">Palmitoylated.</text>
</comment>
<comment type="PTM">
    <text evidence="1">In natural infection, inactive HA is matured into HA1 and HA2 outside the cell by one or more trypsin-like, arginine-specific endoprotease secreted by the bronchial epithelial cells. One identified protease that may be involved in this process is secreted in lungs by club cells.</text>
</comment>
<comment type="miscellaneous">
    <text>Major glycoprotein, comprises over 80% of the envelope proteins present in virus particle.</text>
</comment>
<comment type="miscellaneous">
    <text>The extent of infection into host organism is determined by HA. Influenza viruses bud from the apical surface of polarized epithelial cells (e.g. bronchial epithelial cells) into lumen of lungs and are therefore usually pneumotropic. The reason is that HA is cleaved by tryptase clara which is restricted to lungs. However, HAs of H5 and H7 pantropic avian viruses subtypes can be cleaved by furin and subtilisin-type enzymes, allowing the virus to grow in other organs than lungs.</text>
</comment>
<comment type="miscellaneous">
    <text evidence="2">The influenza A genome consist of 8 RNA segments. Genetic variation of hemagglutinin and/or neuraminidase genes results in the emergence of new influenza strains. The mechanism of variation can be the result of point mutations or the result of genetic reassortment between segments of two different strains.</text>
</comment>
<comment type="similarity">
    <text evidence="1">Belongs to the influenza viruses hemagglutinin family.</text>
</comment>
<sequence length="565" mass="63686">MKTTIILILLTHWVYSQNPTSGNNTATLCLGHHAVANGTLVKTITDDQIEVTNATELVQSTSIGKICNNPYRVLDGRNCTLIDAMLGDPHCDVFQYENWDLFIERSSAFSNCYPYDIPDYASLRSIVASSGTLEFTAEGFTWTGVTQNGRSGACRRGSADSFFSRLNWLTKSGNSYPTLNVTMPNNNNFDKLYIWGIHHPSTNNEQTKLYVQELGRVTVSTKRSQQTIIPNIGSRPGVRGQSGRISIYWTIVKPGDILMINSNGNLVAPRGYFKMRTGKSSIMRSDAPIDTCVSECITPNGSIPNDKPFQNVNKVTYGKCPKYIKQNTLKLATGMRNVPEKQIRGIFGAIAGFIENGWEGMVDGWYGFRYQNSEGTGQAADLKSTQAAIDQINGKLNRVIERTNEKFHQIEKEFSEVEGRIQDLEKYVEDTKIDLWSYNAELLVALENQHTIDLTDAEMNKLFEKTRRQLRENAEDMGNGCFKIYHKCDNACIGSIRNGTYDHYIYRDEALNNRFQIKGVELKSGYKDWILWISFAISCFLICVVLLGFIMWACQKGNIRCNICI</sequence>
<name>HEMA_I76A8</name>
<organismHost>
    <name type="scientific">Aves</name>
    <dbReference type="NCBI Taxonomy" id="8782"/>
</organismHost>
<organismHost>
    <name type="scientific">Equus caballus</name>
    <name type="common">Horse</name>
    <dbReference type="NCBI Taxonomy" id="9796"/>
</organismHost>
<gene>
    <name evidence="1" type="primary">HA</name>
</gene>
<evidence type="ECO:0000255" key="1">
    <source>
        <dbReference type="HAMAP-Rule" id="MF_04072"/>
    </source>
</evidence>
<evidence type="ECO:0000305" key="2"/>
<reference key="1">
    <citation type="journal article" date="1989" name="Virology">
        <title>Evolution of the hemagglutinin of equine H3 influenza viruses.</title>
        <authorList>
            <person name="Kawaoka Y."/>
            <person name="Bean W.J."/>
            <person name="Webster R.G."/>
        </authorList>
    </citation>
    <scope>NUCLEOTIDE SEQUENCE [GENOMIC RNA]</scope>
</reference>
<reference key="2">
    <citation type="journal article" date="1992" name="J. Virol.">
        <title>Evolution of the H3 influenza virus hemagglutinin from human and nonhuman hosts.</title>
        <authorList>
            <person name="Bean W.J."/>
            <person name="Schell M."/>
            <person name="Katz J."/>
            <person name="Kawaoka Y."/>
            <person name="Naeve C."/>
            <person name="Gorman O."/>
            <person name="Webster R.G."/>
        </authorList>
    </citation>
    <scope>NUCLEOTIDE SEQUENCE [GENOMIC RNA]</scope>
</reference>
<accession>P16995</accession>
<accession>Q1G0M0</accession>
<accession>Q83992</accession>
<accession>Q83993</accession>
<dbReference type="EMBL" id="M24723">
    <property type="protein sequence ID" value="AAA43101.1"/>
    <property type="status" value="ALT_SEQ"/>
    <property type="molecule type" value="Genomic_RNA"/>
</dbReference>
<dbReference type="EMBL" id="M73773">
    <property type="protein sequence ID" value="ABF60576.1"/>
    <property type="molecule type" value="Genomic_RNA"/>
</dbReference>
<dbReference type="SMR" id="P16995"/>
<dbReference type="GlyCosmos" id="P16995">
    <property type="glycosylation" value="7 sites, No reported glycans"/>
</dbReference>
<dbReference type="GO" id="GO:0020002">
    <property type="term" value="C:host cell plasma membrane"/>
    <property type="evidence" value="ECO:0007669"/>
    <property type="project" value="UniProtKB-SubCell"/>
</dbReference>
<dbReference type="GO" id="GO:0016020">
    <property type="term" value="C:membrane"/>
    <property type="evidence" value="ECO:0007669"/>
    <property type="project" value="UniProtKB-UniRule"/>
</dbReference>
<dbReference type="GO" id="GO:0019031">
    <property type="term" value="C:viral envelope"/>
    <property type="evidence" value="ECO:0007669"/>
    <property type="project" value="UniProtKB-UniRule"/>
</dbReference>
<dbReference type="GO" id="GO:0055036">
    <property type="term" value="C:virion membrane"/>
    <property type="evidence" value="ECO:0007669"/>
    <property type="project" value="UniProtKB-SubCell"/>
</dbReference>
<dbReference type="GO" id="GO:0046789">
    <property type="term" value="F:host cell surface receptor binding"/>
    <property type="evidence" value="ECO:0007669"/>
    <property type="project" value="UniProtKB-UniRule"/>
</dbReference>
<dbReference type="GO" id="GO:0075512">
    <property type="term" value="P:clathrin-dependent endocytosis of virus by host cell"/>
    <property type="evidence" value="ECO:0007669"/>
    <property type="project" value="UniProtKB-UniRule"/>
</dbReference>
<dbReference type="GO" id="GO:0039654">
    <property type="term" value="P:fusion of virus membrane with host endosome membrane"/>
    <property type="evidence" value="ECO:0007669"/>
    <property type="project" value="UniProtKB-UniRule"/>
</dbReference>
<dbReference type="GO" id="GO:0019064">
    <property type="term" value="P:fusion of virus membrane with host plasma membrane"/>
    <property type="evidence" value="ECO:0007669"/>
    <property type="project" value="InterPro"/>
</dbReference>
<dbReference type="GO" id="GO:0046761">
    <property type="term" value="P:viral budding from plasma membrane"/>
    <property type="evidence" value="ECO:0007669"/>
    <property type="project" value="UniProtKB-UniRule"/>
</dbReference>
<dbReference type="GO" id="GO:0019062">
    <property type="term" value="P:virion attachment to host cell"/>
    <property type="evidence" value="ECO:0007669"/>
    <property type="project" value="UniProtKB-KW"/>
</dbReference>
<dbReference type="FunFam" id="3.90.20.10:FF:000001">
    <property type="entry name" value="Hemagglutinin"/>
    <property type="match status" value="1"/>
</dbReference>
<dbReference type="FunFam" id="3.90.209.20:FF:000001">
    <property type="entry name" value="Hemagglutinin"/>
    <property type="match status" value="1"/>
</dbReference>
<dbReference type="Gene3D" id="3.90.20.10">
    <property type="match status" value="1"/>
</dbReference>
<dbReference type="Gene3D" id="3.90.209.20">
    <property type="match status" value="1"/>
</dbReference>
<dbReference type="HAMAP" id="MF_04072">
    <property type="entry name" value="INFV_HEMA"/>
    <property type="match status" value="1"/>
</dbReference>
<dbReference type="InterPro" id="IPR008980">
    <property type="entry name" value="Capsid_hemagglutn"/>
</dbReference>
<dbReference type="InterPro" id="IPR013828">
    <property type="entry name" value="Hemagglutn_HA1_a/b_dom_sf"/>
</dbReference>
<dbReference type="InterPro" id="IPR000149">
    <property type="entry name" value="Hemagglutn_influenz_A"/>
</dbReference>
<dbReference type="InterPro" id="IPR001364">
    <property type="entry name" value="Hemagglutn_influenz_A/B"/>
</dbReference>
<dbReference type="Pfam" id="PF00509">
    <property type="entry name" value="Hemagglutinin"/>
    <property type="match status" value="1"/>
</dbReference>
<dbReference type="PRINTS" id="PR00330">
    <property type="entry name" value="HEMAGGLUTN1"/>
</dbReference>
<dbReference type="PRINTS" id="PR00329">
    <property type="entry name" value="HEMAGGLUTN12"/>
</dbReference>
<dbReference type="SUPFAM" id="SSF58064">
    <property type="entry name" value="Influenza hemagglutinin (stalk)"/>
    <property type="match status" value="1"/>
</dbReference>
<dbReference type="SUPFAM" id="SSF49818">
    <property type="entry name" value="Viral protein domain"/>
    <property type="match status" value="1"/>
</dbReference>